<name>Y1309_STRPZ</name>
<proteinExistence type="inferred from homology"/>
<reference key="1">
    <citation type="journal article" date="2008" name="J. Bacteriol.">
        <title>Genome sequence of a nephritogenic and highly transformable M49 strain of Streptococcus pyogenes.</title>
        <authorList>
            <person name="McShan W.M."/>
            <person name="Ferretti J.J."/>
            <person name="Karasawa T."/>
            <person name="Suvorov A.N."/>
            <person name="Lin S."/>
            <person name="Qin B."/>
            <person name="Jia H."/>
            <person name="Kenton S."/>
            <person name="Najar F."/>
            <person name="Wu H."/>
            <person name="Scott J."/>
            <person name="Roe B.A."/>
            <person name="Savic D.J."/>
        </authorList>
    </citation>
    <scope>NUCLEOTIDE SEQUENCE [LARGE SCALE GENOMIC DNA]</scope>
    <source>
        <strain>NZ131</strain>
    </source>
</reference>
<feature type="chain" id="PRO_1000137019" description="UPF0291 protein Spy49_1309c">
    <location>
        <begin position="1"/>
        <end position="85"/>
    </location>
</feature>
<feature type="region of interest" description="Disordered" evidence="2">
    <location>
        <begin position="62"/>
        <end position="85"/>
    </location>
</feature>
<organism>
    <name type="scientific">Streptococcus pyogenes serotype M49 (strain NZ131)</name>
    <dbReference type="NCBI Taxonomy" id="471876"/>
    <lineage>
        <taxon>Bacteria</taxon>
        <taxon>Bacillati</taxon>
        <taxon>Bacillota</taxon>
        <taxon>Bacilli</taxon>
        <taxon>Lactobacillales</taxon>
        <taxon>Streptococcaceae</taxon>
        <taxon>Streptococcus</taxon>
    </lineage>
</organism>
<sequence length="85" mass="9801">MDPKKIARINELAKKKKTVGLTGPEKVEQAKLREEYIEGYRRSVRHHIEGIKLVDEEGNDVTPEKLRQVQREKGLHGRSLDDPKS</sequence>
<protein>
    <recommendedName>
        <fullName evidence="1">UPF0291 protein Spy49_1309c</fullName>
    </recommendedName>
</protein>
<keyword id="KW-0963">Cytoplasm</keyword>
<evidence type="ECO:0000255" key="1">
    <source>
        <dbReference type="HAMAP-Rule" id="MF_01103"/>
    </source>
</evidence>
<evidence type="ECO:0000256" key="2">
    <source>
        <dbReference type="SAM" id="MobiDB-lite"/>
    </source>
</evidence>
<accession>B5XMM8</accession>
<dbReference type="EMBL" id="CP000829">
    <property type="protein sequence ID" value="ACI61590.1"/>
    <property type="molecule type" value="Genomic_DNA"/>
</dbReference>
<dbReference type="SMR" id="B5XMM8"/>
<dbReference type="KEGG" id="soz:Spy49_1309c"/>
<dbReference type="HOGENOM" id="CLU_173137_0_2_9"/>
<dbReference type="Proteomes" id="UP000001039">
    <property type="component" value="Chromosome"/>
</dbReference>
<dbReference type="GO" id="GO:0005737">
    <property type="term" value="C:cytoplasm"/>
    <property type="evidence" value="ECO:0007669"/>
    <property type="project" value="UniProtKB-SubCell"/>
</dbReference>
<dbReference type="Gene3D" id="1.10.287.540">
    <property type="entry name" value="Helix hairpin bin"/>
    <property type="match status" value="1"/>
</dbReference>
<dbReference type="HAMAP" id="MF_01103">
    <property type="entry name" value="UPF0291"/>
    <property type="match status" value="1"/>
</dbReference>
<dbReference type="InterPro" id="IPR009242">
    <property type="entry name" value="DUF896"/>
</dbReference>
<dbReference type="NCBIfam" id="NF002711">
    <property type="entry name" value="PRK02539.1"/>
    <property type="match status" value="1"/>
</dbReference>
<dbReference type="PANTHER" id="PTHR37300">
    <property type="entry name" value="UPF0291 PROTEIN CBO2609/CLC_2481"/>
    <property type="match status" value="1"/>
</dbReference>
<dbReference type="PANTHER" id="PTHR37300:SF1">
    <property type="entry name" value="UPF0291 PROTEIN YNZC"/>
    <property type="match status" value="1"/>
</dbReference>
<dbReference type="Pfam" id="PF05979">
    <property type="entry name" value="DUF896"/>
    <property type="match status" value="1"/>
</dbReference>
<dbReference type="SUPFAM" id="SSF158221">
    <property type="entry name" value="YnzC-like"/>
    <property type="match status" value="1"/>
</dbReference>
<comment type="subcellular location">
    <subcellularLocation>
        <location evidence="1">Cytoplasm</location>
    </subcellularLocation>
</comment>
<comment type="similarity">
    <text evidence="1">Belongs to the UPF0291 family.</text>
</comment>
<gene>
    <name type="ordered locus">Spy49_1309c</name>
</gene>